<organism>
    <name type="scientific">Homo sapiens</name>
    <name type="common">Human</name>
    <dbReference type="NCBI Taxonomy" id="9606"/>
    <lineage>
        <taxon>Eukaryota</taxon>
        <taxon>Metazoa</taxon>
        <taxon>Chordata</taxon>
        <taxon>Craniata</taxon>
        <taxon>Vertebrata</taxon>
        <taxon>Euteleostomi</taxon>
        <taxon>Mammalia</taxon>
        <taxon>Eutheria</taxon>
        <taxon>Euarchontoglires</taxon>
        <taxon>Primates</taxon>
        <taxon>Haplorrhini</taxon>
        <taxon>Catarrhini</taxon>
        <taxon>Hominidae</taxon>
        <taxon>Homo</taxon>
    </lineage>
</organism>
<accession>Q96MM6</accession>
<accession>D3DVX7</accession>
<accession>Q2TAK3</accession>
<accession>Q9BR52</accession>
<keyword id="KW-0067">ATP-binding</keyword>
<keyword id="KW-0547">Nucleotide-binding</keyword>
<keyword id="KW-0597">Phosphoprotein</keyword>
<keyword id="KW-1267">Proteomics identification</keyword>
<keyword id="KW-1185">Reference proteome</keyword>
<comment type="interaction">
    <interactant intactId="EBI-10291310">
        <id>Q96MM6</id>
    </interactant>
    <interactant intactId="EBI-3867333">
        <id>A8MQ03</id>
        <label>CYSRT1</label>
    </interactant>
    <organismsDiffer>false</organismsDiffer>
    <experiments>3</experiments>
</comment>
<comment type="interaction">
    <interactant intactId="EBI-10291310">
        <id>Q96MM6</id>
    </interactant>
    <interactant intactId="EBI-743414">
        <id>O95967</id>
        <label>EFEMP2</label>
    </interactant>
    <organismsDiffer>false</organismsDiffer>
    <experiments>3</experiments>
</comment>
<comment type="interaction">
    <interactant intactId="EBI-10291310">
        <id>Q96MM6</id>
    </interactant>
    <interactant intactId="EBI-296980">
        <id>O43301</id>
        <label>HSPA12A</label>
    </interactant>
    <organismsDiffer>false</organismsDiffer>
    <experiments>5</experiments>
</comment>
<comment type="interaction">
    <interactant intactId="EBI-10291310">
        <id>Q96MM6</id>
    </interactant>
    <interactant intactId="EBI-948001">
        <id>Q15323</id>
        <label>KRT31</label>
    </interactant>
    <organismsDiffer>false</organismsDiffer>
    <experiments>6</experiments>
</comment>
<comment type="interaction">
    <interactant intactId="EBI-10291310">
        <id>Q96MM6</id>
    </interactant>
    <interactant intactId="EBI-1047093">
        <id>O76011</id>
        <label>KRT34</label>
    </interactant>
    <organismsDiffer>false</organismsDiffer>
    <experiments>3</experiments>
</comment>
<comment type="interaction">
    <interactant intactId="EBI-10291310">
        <id>Q96MM6</id>
    </interactant>
    <interactant intactId="EBI-10171697">
        <id>Q6A162</id>
        <label>KRT40</label>
    </interactant>
    <organismsDiffer>false</organismsDiffer>
    <experiments>3</experiments>
</comment>
<comment type="interaction">
    <interactant intactId="EBI-10291310">
        <id>Q96MM6</id>
    </interactant>
    <interactant intactId="EBI-10171774">
        <id>P60410</id>
        <label>KRTAP10-8</label>
    </interactant>
    <organismsDiffer>false</organismsDiffer>
    <experiments>3</experiments>
</comment>
<comment type="interaction">
    <interactant intactId="EBI-10291310">
        <id>Q96MM6</id>
    </interactant>
    <interactant intactId="EBI-945833">
        <id>Q7Z3S9</id>
        <label>NOTCH2NLA</label>
    </interactant>
    <organismsDiffer>false</organismsDiffer>
    <experiments>3</experiments>
</comment>
<comment type="interaction">
    <interactant intactId="EBI-10291310">
        <id>Q96MM6</id>
    </interactant>
    <interactant intactId="EBI-22310682">
        <id>P0DPK4</id>
        <label>NOTCH2NLC</label>
    </interactant>
    <organismsDiffer>false</organismsDiffer>
    <experiments>3</experiments>
</comment>
<comment type="interaction">
    <interactant intactId="EBI-10291310">
        <id>Q96MM6</id>
    </interactant>
    <interactant intactId="EBI-355744">
        <id>Q12933</id>
        <label>TRAF2</label>
    </interactant>
    <organismsDiffer>false</organismsDiffer>
    <experiments>3</experiments>
</comment>
<comment type="tissue specificity">
    <text evidence="3">Highest expression in muscle and heart. Lower levels in liver and kidney.</text>
</comment>
<comment type="similarity">
    <text evidence="4">Belongs to the heat shock protein 70 family.</text>
</comment>
<proteinExistence type="evidence at protein level"/>
<reference key="1">
    <citation type="journal article" date="2004" name="Nat. Genet.">
        <title>Complete sequencing and characterization of 21,243 full-length human cDNAs.</title>
        <authorList>
            <person name="Ota T."/>
            <person name="Suzuki Y."/>
            <person name="Nishikawa T."/>
            <person name="Otsuki T."/>
            <person name="Sugiyama T."/>
            <person name="Irie R."/>
            <person name="Wakamatsu A."/>
            <person name="Hayashi K."/>
            <person name="Sato H."/>
            <person name="Nagai K."/>
            <person name="Kimura K."/>
            <person name="Makita H."/>
            <person name="Sekine M."/>
            <person name="Obayashi M."/>
            <person name="Nishi T."/>
            <person name="Shibahara T."/>
            <person name="Tanaka T."/>
            <person name="Ishii S."/>
            <person name="Yamamoto J."/>
            <person name="Saito K."/>
            <person name="Kawai Y."/>
            <person name="Isono Y."/>
            <person name="Nakamura Y."/>
            <person name="Nagahari K."/>
            <person name="Murakami K."/>
            <person name="Yasuda T."/>
            <person name="Iwayanagi T."/>
            <person name="Wagatsuma M."/>
            <person name="Shiratori A."/>
            <person name="Sudo H."/>
            <person name="Hosoiri T."/>
            <person name="Kaku Y."/>
            <person name="Kodaira H."/>
            <person name="Kondo H."/>
            <person name="Sugawara M."/>
            <person name="Takahashi M."/>
            <person name="Kanda K."/>
            <person name="Yokoi T."/>
            <person name="Furuya T."/>
            <person name="Kikkawa E."/>
            <person name="Omura Y."/>
            <person name="Abe K."/>
            <person name="Kamihara K."/>
            <person name="Katsuta N."/>
            <person name="Sato K."/>
            <person name="Tanikawa M."/>
            <person name="Yamazaki M."/>
            <person name="Ninomiya K."/>
            <person name="Ishibashi T."/>
            <person name="Yamashita H."/>
            <person name="Murakawa K."/>
            <person name="Fujimori K."/>
            <person name="Tanai H."/>
            <person name="Kimata M."/>
            <person name="Watanabe M."/>
            <person name="Hiraoka S."/>
            <person name="Chiba Y."/>
            <person name="Ishida S."/>
            <person name="Ono Y."/>
            <person name="Takiguchi S."/>
            <person name="Watanabe S."/>
            <person name="Yosida M."/>
            <person name="Hotuta T."/>
            <person name="Kusano J."/>
            <person name="Kanehori K."/>
            <person name="Takahashi-Fujii A."/>
            <person name="Hara H."/>
            <person name="Tanase T.-O."/>
            <person name="Nomura Y."/>
            <person name="Togiya S."/>
            <person name="Komai F."/>
            <person name="Hara R."/>
            <person name="Takeuchi K."/>
            <person name="Arita M."/>
            <person name="Imose N."/>
            <person name="Musashino K."/>
            <person name="Yuuki H."/>
            <person name="Oshima A."/>
            <person name="Sasaki N."/>
            <person name="Aotsuka S."/>
            <person name="Yoshikawa Y."/>
            <person name="Matsunawa H."/>
            <person name="Ichihara T."/>
            <person name="Shiohata N."/>
            <person name="Sano S."/>
            <person name="Moriya S."/>
            <person name="Momiyama H."/>
            <person name="Satoh N."/>
            <person name="Takami S."/>
            <person name="Terashima Y."/>
            <person name="Suzuki O."/>
            <person name="Nakagawa S."/>
            <person name="Senoh A."/>
            <person name="Mizoguchi H."/>
            <person name="Goto Y."/>
            <person name="Shimizu F."/>
            <person name="Wakebe H."/>
            <person name="Hishigaki H."/>
            <person name="Watanabe T."/>
            <person name="Sugiyama A."/>
            <person name="Takemoto M."/>
            <person name="Kawakami B."/>
            <person name="Yamazaki M."/>
            <person name="Watanabe K."/>
            <person name="Kumagai A."/>
            <person name="Itakura S."/>
            <person name="Fukuzumi Y."/>
            <person name="Fujimori Y."/>
            <person name="Komiyama M."/>
            <person name="Tashiro H."/>
            <person name="Tanigami A."/>
            <person name="Fujiwara T."/>
            <person name="Ono T."/>
            <person name="Yamada K."/>
            <person name="Fujii Y."/>
            <person name="Ozaki K."/>
            <person name="Hirao M."/>
            <person name="Ohmori Y."/>
            <person name="Kawabata A."/>
            <person name="Hikiji T."/>
            <person name="Kobatake N."/>
            <person name="Inagaki H."/>
            <person name="Ikema Y."/>
            <person name="Okamoto S."/>
            <person name="Okitani R."/>
            <person name="Kawakami T."/>
            <person name="Noguchi S."/>
            <person name="Itoh T."/>
            <person name="Shigeta K."/>
            <person name="Senba T."/>
            <person name="Matsumura K."/>
            <person name="Nakajima Y."/>
            <person name="Mizuno T."/>
            <person name="Morinaga M."/>
            <person name="Sasaki M."/>
            <person name="Togashi T."/>
            <person name="Oyama M."/>
            <person name="Hata H."/>
            <person name="Watanabe M."/>
            <person name="Komatsu T."/>
            <person name="Mizushima-Sugano J."/>
            <person name="Satoh T."/>
            <person name="Shirai Y."/>
            <person name="Takahashi Y."/>
            <person name="Nakagawa K."/>
            <person name="Okumura K."/>
            <person name="Nagase T."/>
            <person name="Nomura N."/>
            <person name="Kikuchi H."/>
            <person name="Masuho Y."/>
            <person name="Yamashita R."/>
            <person name="Nakai K."/>
            <person name="Yada T."/>
            <person name="Nakamura Y."/>
            <person name="Ohara O."/>
            <person name="Isogai T."/>
            <person name="Sugano S."/>
        </authorList>
    </citation>
    <scope>NUCLEOTIDE SEQUENCE [LARGE SCALE MRNA]</scope>
    <source>
        <tissue>Placenta</tissue>
    </source>
</reference>
<reference key="2">
    <citation type="journal article" date="2001" name="Nature">
        <title>The DNA sequence and comparative analysis of human chromosome 20.</title>
        <authorList>
            <person name="Deloukas P."/>
            <person name="Matthews L.H."/>
            <person name="Ashurst J.L."/>
            <person name="Burton J."/>
            <person name="Gilbert J.G.R."/>
            <person name="Jones M."/>
            <person name="Stavrides G."/>
            <person name="Almeida J.P."/>
            <person name="Babbage A.K."/>
            <person name="Bagguley C.L."/>
            <person name="Bailey J."/>
            <person name="Barlow K.F."/>
            <person name="Bates K.N."/>
            <person name="Beard L.M."/>
            <person name="Beare D.M."/>
            <person name="Beasley O.P."/>
            <person name="Bird C.P."/>
            <person name="Blakey S.E."/>
            <person name="Bridgeman A.M."/>
            <person name="Brown A.J."/>
            <person name="Buck D."/>
            <person name="Burrill W.D."/>
            <person name="Butler A.P."/>
            <person name="Carder C."/>
            <person name="Carter N.P."/>
            <person name="Chapman J.C."/>
            <person name="Clamp M."/>
            <person name="Clark G."/>
            <person name="Clark L.N."/>
            <person name="Clark S.Y."/>
            <person name="Clee C.M."/>
            <person name="Clegg S."/>
            <person name="Cobley V.E."/>
            <person name="Collier R.E."/>
            <person name="Connor R.E."/>
            <person name="Corby N.R."/>
            <person name="Coulson A."/>
            <person name="Coville G.J."/>
            <person name="Deadman R."/>
            <person name="Dhami P.D."/>
            <person name="Dunn M."/>
            <person name="Ellington A.G."/>
            <person name="Frankland J.A."/>
            <person name="Fraser A."/>
            <person name="French L."/>
            <person name="Garner P."/>
            <person name="Grafham D.V."/>
            <person name="Griffiths C."/>
            <person name="Griffiths M.N.D."/>
            <person name="Gwilliam R."/>
            <person name="Hall R.E."/>
            <person name="Hammond S."/>
            <person name="Harley J.L."/>
            <person name="Heath P.D."/>
            <person name="Ho S."/>
            <person name="Holden J.L."/>
            <person name="Howden P.J."/>
            <person name="Huckle E."/>
            <person name="Hunt A.R."/>
            <person name="Hunt S.E."/>
            <person name="Jekosch K."/>
            <person name="Johnson C.M."/>
            <person name="Johnson D."/>
            <person name="Kay M.P."/>
            <person name="Kimberley A.M."/>
            <person name="King A."/>
            <person name="Knights A."/>
            <person name="Laird G.K."/>
            <person name="Lawlor S."/>
            <person name="Lehvaeslaiho M.H."/>
            <person name="Leversha M.A."/>
            <person name="Lloyd C."/>
            <person name="Lloyd D.M."/>
            <person name="Lovell J.D."/>
            <person name="Marsh V.L."/>
            <person name="Martin S.L."/>
            <person name="McConnachie L.J."/>
            <person name="McLay K."/>
            <person name="McMurray A.A."/>
            <person name="Milne S.A."/>
            <person name="Mistry D."/>
            <person name="Moore M.J.F."/>
            <person name="Mullikin J.C."/>
            <person name="Nickerson T."/>
            <person name="Oliver K."/>
            <person name="Parker A."/>
            <person name="Patel R."/>
            <person name="Pearce T.A.V."/>
            <person name="Peck A.I."/>
            <person name="Phillimore B.J.C.T."/>
            <person name="Prathalingam S.R."/>
            <person name="Plumb R.W."/>
            <person name="Ramsay H."/>
            <person name="Rice C.M."/>
            <person name="Ross M.T."/>
            <person name="Scott C.E."/>
            <person name="Sehra H.K."/>
            <person name="Shownkeen R."/>
            <person name="Sims S."/>
            <person name="Skuce C.D."/>
            <person name="Smith M.L."/>
            <person name="Soderlund C."/>
            <person name="Steward C.A."/>
            <person name="Sulston J.E."/>
            <person name="Swann R.M."/>
            <person name="Sycamore N."/>
            <person name="Taylor R."/>
            <person name="Tee L."/>
            <person name="Thomas D.W."/>
            <person name="Thorpe A."/>
            <person name="Tracey A."/>
            <person name="Tromans A.C."/>
            <person name="Vaudin M."/>
            <person name="Wall M."/>
            <person name="Wallis J.M."/>
            <person name="Whitehead S.L."/>
            <person name="Whittaker P."/>
            <person name="Willey D.L."/>
            <person name="Williams L."/>
            <person name="Williams S.A."/>
            <person name="Wilming L."/>
            <person name="Wray P.W."/>
            <person name="Hubbard T."/>
            <person name="Durbin R.M."/>
            <person name="Bentley D.R."/>
            <person name="Beck S."/>
            <person name="Rogers J."/>
        </authorList>
    </citation>
    <scope>NUCLEOTIDE SEQUENCE [LARGE SCALE GENOMIC DNA]</scope>
</reference>
<reference key="3">
    <citation type="submission" date="2005-09" db="EMBL/GenBank/DDBJ databases">
        <authorList>
            <person name="Mural R.J."/>
            <person name="Istrail S."/>
            <person name="Sutton G.G."/>
            <person name="Florea L."/>
            <person name="Halpern A.L."/>
            <person name="Mobarry C.M."/>
            <person name="Lippert R."/>
            <person name="Walenz B."/>
            <person name="Shatkay H."/>
            <person name="Dew I."/>
            <person name="Miller J.R."/>
            <person name="Flanigan M.J."/>
            <person name="Edwards N.J."/>
            <person name="Bolanos R."/>
            <person name="Fasulo D."/>
            <person name="Halldorsson B.V."/>
            <person name="Hannenhalli S."/>
            <person name="Turner R."/>
            <person name="Yooseph S."/>
            <person name="Lu F."/>
            <person name="Nusskern D.R."/>
            <person name="Shue B.C."/>
            <person name="Zheng X.H."/>
            <person name="Zhong F."/>
            <person name="Delcher A.L."/>
            <person name="Huson D.H."/>
            <person name="Kravitz S.A."/>
            <person name="Mouchard L."/>
            <person name="Reinert K."/>
            <person name="Remington K.A."/>
            <person name="Clark A.G."/>
            <person name="Waterman M.S."/>
            <person name="Eichler E.E."/>
            <person name="Adams M.D."/>
            <person name="Hunkapiller M.W."/>
            <person name="Myers E.W."/>
            <person name="Venter J.C."/>
        </authorList>
    </citation>
    <scope>NUCLEOTIDE SEQUENCE [LARGE SCALE GENOMIC DNA]</scope>
</reference>
<reference key="4">
    <citation type="journal article" date="2004" name="Genome Res.">
        <title>The status, quality, and expansion of the NIH full-length cDNA project: the Mammalian Gene Collection (MGC).</title>
        <authorList>
            <consortium name="The MGC Project Team"/>
        </authorList>
    </citation>
    <scope>NUCLEOTIDE SEQUENCE [LARGE SCALE MRNA]</scope>
    <source>
        <tissue>Brain</tissue>
        <tissue>Ovary</tissue>
    </source>
</reference>
<reference key="5">
    <citation type="journal article" date="2003" name="Proc. Natl. Acad. Sci. U.S.A.">
        <title>Two Hsp70 family members expressed in atherosclerotic lesions.</title>
        <authorList>
            <person name="Han Z."/>
            <person name="Truong Q.A."/>
            <person name="Park S."/>
            <person name="Breslow J.L."/>
        </authorList>
    </citation>
    <scope>IDENTIFICATION</scope>
    <scope>TISSUE SPECIFICITY</scope>
</reference>
<reference key="6">
    <citation type="journal article" date="2014" name="J. Proteomics">
        <title>An enzyme assisted RP-RPLC approach for in-depth analysis of human liver phosphoproteome.</title>
        <authorList>
            <person name="Bian Y."/>
            <person name="Song C."/>
            <person name="Cheng K."/>
            <person name="Dong M."/>
            <person name="Wang F."/>
            <person name="Huang J."/>
            <person name="Sun D."/>
            <person name="Wang L."/>
            <person name="Ye M."/>
            <person name="Zou H."/>
        </authorList>
    </citation>
    <scope>PHOSPHORYLATION [LARGE SCALE ANALYSIS] AT SER-25; SER-29 AND SER-276</scope>
    <scope>IDENTIFICATION BY MASS SPECTROMETRY [LARGE SCALE ANALYSIS]</scope>
    <source>
        <tissue>Liver</tissue>
    </source>
</reference>
<dbReference type="EMBL" id="AK056712">
    <property type="protein sequence ID" value="BAB71261.1"/>
    <property type="molecule type" value="mRNA"/>
</dbReference>
<dbReference type="EMBL" id="AL109804">
    <property type="status" value="NOT_ANNOTATED_CDS"/>
    <property type="molecule type" value="Genomic_DNA"/>
</dbReference>
<dbReference type="EMBL" id="CH471133">
    <property type="protein sequence ID" value="EAX10516.1"/>
    <property type="molecule type" value="Genomic_DNA"/>
</dbReference>
<dbReference type="EMBL" id="BC110881">
    <property type="protein sequence ID" value="AAI10882.1"/>
    <property type="molecule type" value="mRNA"/>
</dbReference>
<dbReference type="EMBL" id="BC117284">
    <property type="protein sequence ID" value="AAI17285.1"/>
    <property type="molecule type" value="mRNA"/>
</dbReference>
<dbReference type="EMBL" id="BC126263">
    <property type="protein sequence ID" value="AAI26264.1"/>
    <property type="molecule type" value="mRNA"/>
</dbReference>
<dbReference type="CCDS" id="CCDS13061.1"/>
<dbReference type="RefSeq" id="NP_001184256.1">
    <property type="nucleotide sequence ID" value="NM_001197327.1"/>
</dbReference>
<dbReference type="RefSeq" id="NP_443202.3">
    <property type="nucleotide sequence ID" value="NM_052970.4"/>
</dbReference>
<dbReference type="RefSeq" id="XP_016883121.1">
    <property type="nucleotide sequence ID" value="XM_017027632.3"/>
</dbReference>
<dbReference type="RefSeq" id="XP_047295825.1">
    <property type="nucleotide sequence ID" value="XM_047439869.1"/>
</dbReference>
<dbReference type="BioGRID" id="125532">
    <property type="interactions" value="74"/>
</dbReference>
<dbReference type="FunCoup" id="Q96MM6">
    <property type="interactions" value="7"/>
</dbReference>
<dbReference type="IntAct" id="Q96MM6">
    <property type="interactions" value="32"/>
</dbReference>
<dbReference type="STRING" id="9606.ENSP00000254963"/>
<dbReference type="iPTMnet" id="Q96MM6"/>
<dbReference type="PhosphoSitePlus" id="Q96MM6"/>
<dbReference type="BioMuta" id="HSPA12B"/>
<dbReference type="DMDM" id="27734244"/>
<dbReference type="jPOST" id="Q96MM6"/>
<dbReference type="MassIVE" id="Q96MM6"/>
<dbReference type="PaxDb" id="9606-ENSP00000254963"/>
<dbReference type="PeptideAtlas" id="Q96MM6"/>
<dbReference type="ProteomicsDB" id="77374"/>
<dbReference type="Antibodypedia" id="2863">
    <property type="antibodies" value="119 antibodies from 24 providers"/>
</dbReference>
<dbReference type="DNASU" id="116835"/>
<dbReference type="Ensembl" id="ENST00000254963.7">
    <property type="protein sequence ID" value="ENSP00000254963.2"/>
    <property type="gene ID" value="ENSG00000132622.11"/>
</dbReference>
<dbReference type="GeneID" id="116835"/>
<dbReference type="KEGG" id="hsa:116835"/>
<dbReference type="MANE-Select" id="ENST00000254963.7">
    <property type="protein sequence ID" value="ENSP00000254963.2"/>
    <property type="RefSeq nucleotide sequence ID" value="NM_052970.5"/>
    <property type="RefSeq protein sequence ID" value="NP_443202.3"/>
</dbReference>
<dbReference type="UCSC" id="uc002wjd.4">
    <property type="organism name" value="human"/>
</dbReference>
<dbReference type="AGR" id="HGNC:16193"/>
<dbReference type="CTD" id="116835"/>
<dbReference type="DisGeNET" id="116835"/>
<dbReference type="GeneCards" id="HSPA12B"/>
<dbReference type="HGNC" id="HGNC:16193">
    <property type="gene designation" value="HSPA12B"/>
</dbReference>
<dbReference type="HPA" id="ENSG00000132622">
    <property type="expression patterns" value="Low tissue specificity"/>
</dbReference>
<dbReference type="MIM" id="610702">
    <property type="type" value="gene"/>
</dbReference>
<dbReference type="neXtProt" id="NX_Q96MM6"/>
<dbReference type="OpenTargets" id="ENSG00000132622"/>
<dbReference type="PharmGKB" id="PA25771"/>
<dbReference type="VEuPathDB" id="HostDB:ENSG00000132622"/>
<dbReference type="eggNOG" id="KOG0101">
    <property type="taxonomic scope" value="Eukaryota"/>
</dbReference>
<dbReference type="GeneTree" id="ENSGT00940000159032"/>
<dbReference type="InParanoid" id="Q96MM6"/>
<dbReference type="OMA" id="IYKHTME"/>
<dbReference type="OrthoDB" id="2963168at2759"/>
<dbReference type="PAN-GO" id="Q96MM6">
    <property type="GO annotations" value="0 GO annotations based on evolutionary models"/>
</dbReference>
<dbReference type="PhylomeDB" id="Q96MM6"/>
<dbReference type="TreeFam" id="TF329492"/>
<dbReference type="PathwayCommons" id="Q96MM6"/>
<dbReference type="Reactome" id="R-HSA-3371453">
    <property type="pathway name" value="Regulation of HSF1-mediated heat shock response"/>
</dbReference>
<dbReference type="SignaLink" id="Q96MM6"/>
<dbReference type="BioGRID-ORCS" id="116835">
    <property type="hits" value="11 hits in 1143 CRISPR screens"/>
</dbReference>
<dbReference type="ChiTaRS" id="HSPA12B">
    <property type="organism name" value="human"/>
</dbReference>
<dbReference type="GenomeRNAi" id="116835"/>
<dbReference type="Pharos" id="Q96MM6">
    <property type="development level" value="Tbio"/>
</dbReference>
<dbReference type="PRO" id="PR:Q96MM6"/>
<dbReference type="Proteomes" id="UP000005640">
    <property type="component" value="Chromosome 20"/>
</dbReference>
<dbReference type="RNAct" id="Q96MM6">
    <property type="molecule type" value="protein"/>
</dbReference>
<dbReference type="Bgee" id="ENSG00000132622">
    <property type="expression patterns" value="Expressed in tendon of biceps brachii and 165 other cell types or tissues"/>
</dbReference>
<dbReference type="ExpressionAtlas" id="Q96MM6">
    <property type="expression patterns" value="baseline and differential"/>
</dbReference>
<dbReference type="GO" id="GO:0005524">
    <property type="term" value="F:ATP binding"/>
    <property type="evidence" value="ECO:0007669"/>
    <property type="project" value="UniProtKB-KW"/>
</dbReference>
<dbReference type="GO" id="GO:0001525">
    <property type="term" value="P:angiogenesis"/>
    <property type="evidence" value="ECO:0007669"/>
    <property type="project" value="Ensembl"/>
</dbReference>
<dbReference type="GO" id="GO:0043542">
    <property type="term" value="P:endothelial cell migration"/>
    <property type="evidence" value="ECO:0007669"/>
    <property type="project" value="Ensembl"/>
</dbReference>
<dbReference type="CDD" id="cd11736">
    <property type="entry name" value="ASKHA_NBD_HSP70_HSPA12B"/>
    <property type="match status" value="1"/>
</dbReference>
<dbReference type="Gene3D" id="3.30.420.40">
    <property type="match status" value="2"/>
</dbReference>
<dbReference type="Gene3D" id="3.90.640.10">
    <property type="entry name" value="Actin, Chain A, domain 4"/>
    <property type="match status" value="1"/>
</dbReference>
<dbReference type="InterPro" id="IPR043129">
    <property type="entry name" value="ATPase_NBD"/>
</dbReference>
<dbReference type="PANTHER" id="PTHR14187">
    <property type="entry name" value="ALPHA KINASE/ELONGATION FACTOR 2 KINASE"/>
    <property type="match status" value="1"/>
</dbReference>
<dbReference type="PANTHER" id="PTHR14187:SF39">
    <property type="entry name" value="HEAT SHOCK 70 KDA PROTEIN 12B"/>
    <property type="match status" value="1"/>
</dbReference>
<dbReference type="SUPFAM" id="SSF53067">
    <property type="entry name" value="Actin-like ATPase domain"/>
    <property type="match status" value="2"/>
</dbReference>
<protein>
    <recommendedName>
        <fullName>Heat shock 70 kDa protein 12B</fullName>
    </recommendedName>
    <alternativeName>
        <fullName>Heat shock protein family A member 12B</fullName>
    </alternativeName>
</protein>
<gene>
    <name type="primary">HSPA12B</name>
    <name type="synonym">C20orf60</name>
</gene>
<name>HS12B_HUMAN</name>
<evidence type="ECO:0000250" key="1">
    <source>
        <dbReference type="UniProtKB" id="Q9CZJ2"/>
    </source>
</evidence>
<evidence type="ECO:0000256" key="2">
    <source>
        <dbReference type="SAM" id="MobiDB-lite"/>
    </source>
</evidence>
<evidence type="ECO:0000269" key="3">
    <source>
    </source>
</evidence>
<evidence type="ECO:0000305" key="4"/>
<evidence type="ECO:0007744" key="5">
    <source>
    </source>
</evidence>
<sequence>MLAVPEMGLQGLYIGSSPERSPVPSPPGSPRTQESCGIAPLTPSQSPKPEVRAPQQASFSVVVAIDFGTTSSGYAFSFASDPEAIHMMRKWEGGDPGVAHQKTPTCLLLTPEGAFHSFGYTARDYYHDLDPEEARDWLYFEKFKMKIHSATDLTLKTQLEAVNGKTMPALEVFAHALRFFREHALQELREQSPSLPEKDTVRWVLTVPAIWKQPAKQFMREAAYLAGLVSRENAEQLLIALEPEAASVYCRKLRLHQLLDLSGRAPGGGRLGERRSIDSSFRQAREQLRRSRHSRTFLVESGVGELWAEMQAGDRYVVADCGGGTVDLTVHQLEQPHGTLKELYKASGGPYGAVGVDLAFEQLLCRIFGEDFIATFKRQRPAAWVDLTIAFEARKRTAGPHRAGALNISLPFSFIDFYRKQRGHNVETALRRSSVNFVKWSSQGMLRMSCEAMNELFQPTVSGIIQHIEALLARPEVQGVKLLFLVGGFAESAVLQHAVQAALGARGLRVVVPHDVGLTILKGAVLFGQAPGVVRVRRSPLTYGVGVLNRFVPGRHPPEKLLVRDGRRWCTDVFERFVAAEQSVALGEEVRRSYCPARPGQRRVLINLYCCAAEDARFITDPGVRKCGALSLELEPADCGQDTAGAPPGRREIRAAMQFGDTEIKVTAVDVSTNRSVRASIDFLSN</sequence>
<feature type="chain" id="PRO_0000078294" description="Heat shock 70 kDa protein 12B">
    <location>
        <begin position="1"/>
        <end position="686"/>
    </location>
</feature>
<feature type="region of interest" description="Disordered" evidence="2">
    <location>
        <begin position="12"/>
        <end position="53"/>
    </location>
</feature>
<feature type="modified residue" description="Phosphoserine" evidence="5">
    <location>
        <position position="25"/>
    </location>
</feature>
<feature type="modified residue" description="Phosphoserine" evidence="5">
    <location>
        <position position="29"/>
    </location>
</feature>
<feature type="modified residue" description="Phosphothreonine" evidence="1">
    <location>
        <position position="42"/>
    </location>
</feature>
<feature type="modified residue" description="Phosphoserine" evidence="1">
    <location>
        <position position="44"/>
    </location>
</feature>
<feature type="modified residue" description="Phosphoserine" evidence="1">
    <location>
        <position position="46"/>
    </location>
</feature>
<feature type="modified residue" description="Phosphoserine" evidence="5">
    <location>
        <position position="276"/>
    </location>
</feature>
<feature type="sequence variant" id="VAR_049621" description="In dbSNP:rs34414870.">
    <original>V</original>
    <variation>L</variation>
    <location>
        <position position="23"/>
    </location>
</feature>
<feature type="sequence variant" id="VAR_059362" description="In dbSNP:rs6139194.">
    <original>R</original>
    <variation>H</variation>
    <location>
        <position position="270"/>
    </location>
</feature>
<feature type="sequence conflict" description="In Ref. 1; BAB71261." evidence="4" ref="1">
    <original>E</original>
    <variation>D</variation>
    <location>
        <position position="300"/>
    </location>
</feature>